<gene>
    <name evidence="1" type="primary">rpmG1</name>
    <name type="ordered locus">MXAN_3069</name>
</gene>
<comment type="similarity">
    <text evidence="1">Belongs to the bacterial ribosomal protein bL33 family.</text>
</comment>
<reference key="1">
    <citation type="journal article" date="2006" name="Proc. Natl. Acad. Sci. U.S.A.">
        <title>Evolution of sensory complexity recorded in a myxobacterial genome.</title>
        <authorList>
            <person name="Goldman B.S."/>
            <person name="Nierman W.C."/>
            <person name="Kaiser D."/>
            <person name="Slater S.C."/>
            <person name="Durkin A.S."/>
            <person name="Eisen J.A."/>
            <person name="Ronning C.M."/>
            <person name="Barbazuk W.B."/>
            <person name="Blanchard M."/>
            <person name="Field C."/>
            <person name="Halling C."/>
            <person name="Hinkle G."/>
            <person name="Iartchuk O."/>
            <person name="Kim H.S."/>
            <person name="Mackenzie C."/>
            <person name="Madupu R."/>
            <person name="Miller N."/>
            <person name="Shvartsbeyn A."/>
            <person name="Sullivan S.A."/>
            <person name="Vaudin M."/>
            <person name="Wiegand R."/>
            <person name="Kaplan H.B."/>
        </authorList>
    </citation>
    <scope>NUCLEOTIDE SEQUENCE [LARGE SCALE GENOMIC DNA]</scope>
    <source>
        <strain>DK1622</strain>
    </source>
</reference>
<dbReference type="EMBL" id="CP000113">
    <property type="protein sequence ID" value="ABF89076.1"/>
    <property type="molecule type" value="Genomic_DNA"/>
</dbReference>
<dbReference type="SMR" id="Q1D7V0"/>
<dbReference type="STRING" id="246197.MXAN_3069"/>
<dbReference type="EnsemblBacteria" id="ABF89076">
    <property type="protein sequence ID" value="ABF89076"/>
    <property type="gene ID" value="MXAN_3069"/>
</dbReference>
<dbReference type="GeneID" id="41360431"/>
<dbReference type="KEGG" id="mxa:MXAN_3069"/>
<dbReference type="eggNOG" id="COG0267">
    <property type="taxonomic scope" value="Bacteria"/>
</dbReference>
<dbReference type="HOGENOM" id="CLU_190949_0_2_7"/>
<dbReference type="OrthoDB" id="21586at2"/>
<dbReference type="Proteomes" id="UP000002402">
    <property type="component" value="Chromosome"/>
</dbReference>
<dbReference type="GO" id="GO:0005737">
    <property type="term" value="C:cytoplasm"/>
    <property type="evidence" value="ECO:0007669"/>
    <property type="project" value="UniProtKB-ARBA"/>
</dbReference>
<dbReference type="GO" id="GO:1990904">
    <property type="term" value="C:ribonucleoprotein complex"/>
    <property type="evidence" value="ECO:0007669"/>
    <property type="project" value="UniProtKB-KW"/>
</dbReference>
<dbReference type="GO" id="GO:0005840">
    <property type="term" value="C:ribosome"/>
    <property type="evidence" value="ECO:0007669"/>
    <property type="project" value="UniProtKB-KW"/>
</dbReference>
<dbReference type="GO" id="GO:0003735">
    <property type="term" value="F:structural constituent of ribosome"/>
    <property type="evidence" value="ECO:0007669"/>
    <property type="project" value="InterPro"/>
</dbReference>
<dbReference type="GO" id="GO:0006412">
    <property type="term" value="P:translation"/>
    <property type="evidence" value="ECO:0007669"/>
    <property type="project" value="UniProtKB-UniRule"/>
</dbReference>
<dbReference type="Gene3D" id="2.20.28.120">
    <property type="entry name" value="Ribosomal protein L33"/>
    <property type="match status" value="1"/>
</dbReference>
<dbReference type="HAMAP" id="MF_00294">
    <property type="entry name" value="Ribosomal_bL33"/>
    <property type="match status" value="1"/>
</dbReference>
<dbReference type="InterPro" id="IPR001705">
    <property type="entry name" value="Ribosomal_bL33"/>
</dbReference>
<dbReference type="InterPro" id="IPR018264">
    <property type="entry name" value="Ribosomal_bL33_CS"/>
</dbReference>
<dbReference type="InterPro" id="IPR038584">
    <property type="entry name" value="Ribosomal_bL33_sf"/>
</dbReference>
<dbReference type="InterPro" id="IPR011332">
    <property type="entry name" value="Ribosomal_zn-bd"/>
</dbReference>
<dbReference type="NCBIfam" id="NF001764">
    <property type="entry name" value="PRK00504.1"/>
    <property type="match status" value="1"/>
</dbReference>
<dbReference type="NCBIfam" id="NF001860">
    <property type="entry name" value="PRK00595.1"/>
    <property type="match status" value="1"/>
</dbReference>
<dbReference type="NCBIfam" id="TIGR01023">
    <property type="entry name" value="rpmG_bact"/>
    <property type="match status" value="1"/>
</dbReference>
<dbReference type="PANTHER" id="PTHR43168">
    <property type="entry name" value="50S RIBOSOMAL PROTEIN L33, CHLOROPLASTIC"/>
    <property type="match status" value="1"/>
</dbReference>
<dbReference type="PANTHER" id="PTHR43168:SF2">
    <property type="entry name" value="LARGE RIBOSOMAL SUBUNIT PROTEIN BL33C"/>
    <property type="match status" value="1"/>
</dbReference>
<dbReference type="Pfam" id="PF00471">
    <property type="entry name" value="Ribosomal_L33"/>
    <property type="match status" value="1"/>
</dbReference>
<dbReference type="SUPFAM" id="SSF57829">
    <property type="entry name" value="Zn-binding ribosomal proteins"/>
    <property type="match status" value="1"/>
</dbReference>
<dbReference type="PROSITE" id="PS00582">
    <property type="entry name" value="RIBOSOMAL_L33"/>
    <property type="match status" value="1"/>
</dbReference>
<feature type="chain" id="PRO_0000356579" description="Large ribosomal subunit protein bL33A">
    <location>
        <begin position="1"/>
        <end position="54"/>
    </location>
</feature>
<evidence type="ECO:0000255" key="1">
    <source>
        <dbReference type="HAMAP-Rule" id="MF_00294"/>
    </source>
</evidence>
<keyword id="KW-1185">Reference proteome</keyword>
<keyword id="KW-0687">Ribonucleoprotein</keyword>
<keyword id="KW-0689">Ribosomal protein</keyword>
<name>RL331_MYXXD</name>
<organism>
    <name type="scientific">Myxococcus xanthus (strain DK1622)</name>
    <dbReference type="NCBI Taxonomy" id="246197"/>
    <lineage>
        <taxon>Bacteria</taxon>
        <taxon>Pseudomonadati</taxon>
        <taxon>Myxococcota</taxon>
        <taxon>Myxococcia</taxon>
        <taxon>Myxococcales</taxon>
        <taxon>Cystobacterineae</taxon>
        <taxon>Myxococcaceae</taxon>
        <taxon>Myxococcus</taxon>
    </lineage>
</organism>
<accession>Q1D7V0</accession>
<protein>
    <recommendedName>
        <fullName evidence="1">Large ribosomal subunit protein bL33A</fullName>
    </recommendedName>
    <alternativeName>
        <fullName evidence="1">50S ribosomal protein L33 1</fullName>
    </alternativeName>
</protein>
<sequence>MPKGNRSIISLECTVCKERNYTTTKNKRKSQDKLELSKFCPRCRKHQDHKEGKV</sequence>
<proteinExistence type="inferred from homology"/>